<name>TAM41_MOUSE</name>
<evidence type="ECO:0000250" key="1">
    <source>
        <dbReference type="UniProtKB" id="D3ZKT0"/>
    </source>
</evidence>
<evidence type="ECO:0000250" key="2">
    <source>
        <dbReference type="UniProtKB" id="P53230"/>
    </source>
</evidence>
<evidence type="ECO:0000303" key="3">
    <source>
    </source>
</evidence>
<evidence type="ECO:0000305" key="4"/>
<keyword id="KW-0025">Alternative splicing</keyword>
<keyword id="KW-0444">Lipid biosynthesis</keyword>
<keyword id="KW-0443">Lipid metabolism</keyword>
<keyword id="KW-0460">Magnesium</keyword>
<keyword id="KW-0472">Membrane</keyword>
<keyword id="KW-0496">Mitochondrion</keyword>
<keyword id="KW-0999">Mitochondrion inner membrane</keyword>
<keyword id="KW-0548">Nucleotidyltransferase</keyword>
<keyword id="KW-0594">Phospholipid biosynthesis</keyword>
<keyword id="KW-1208">Phospholipid metabolism</keyword>
<keyword id="KW-1185">Reference proteome</keyword>
<keyword id="KW-0808">Transferase</keyword>
<dbReference type="EC" id="2.7.7.41" evidence="1"/>
<dbReference type="EMBL" id="AK005100">
    <property type="status" value="NOT_ANNOTATED_CDS"/>
    <property type="molecule type" value="mRNA"/>
</dbReference>
<dbReference type="EMBL" id="AK160774">
    <property type="protein sequence ID" value="BAE36000.1"/>
    <property type="molecule type" value="mRNA"/>
</dbReference>
<dbReference type="CCDS" id="CCDS20437.1">
    <molecule id="Q3TUH1-1"/>
</dbReference>
<dbReference type="SMR" id="Q3TUH1"/>
<dbReference type="FunCoup" id="Q3TUH1">
    <property type="interactions" value="1709"/>
</dbReference>
<dbReference type="STRING" id="10090.ENSMUSP00000032461"/>
<dbReference type="iPTMnet" id="Q3TUH1"/>
<dbReference type="PhosphoSitePlus" id="Q3TUH1"/>
<dbReference type="PaxDb" id="10090-ENSMUSP00000032461"/>
<dbReference type="PeptideAtlas" id="Q3TUH1"/>
<dbReference type="ProteomicsDB" id="262929">
    <molecule id="Q3TUH1-1"/>
</dbReference>
<dbReference type="ProteomicsDB" id="262930">
    <molecule id="Q3TUH1-2"/>
</dbReference>
<dbReference type="Pumba" id="Q3TUH1"/>
<dbReference type="UCSC" id="uc009dik.1">
    <molecule id="Q3TUH1-2"/>
    <property type="organism name" value="mouse"/>
</dbReference>
<dbReference type="AGR" id="MGI:1916221"/>
<dbReference type="MGI" id="MGI:1916221">
    <property type="gene designation" value="Tamm41"/>
</dbReference>
<dbReference type="eggNOG" id="KOG2986">
    <property type="taxonomic scope" value="Eukaryota"/>
</dbReference>
<dbReference type="InParanoid" id="Q3TUH1"/>
<dbReference type="PhylomeDB" id="Q3TUH1"/>
<dbReference type="UniPathway" id="UPA00557">
    <property type="reaction ID" value="UER00614"/>
</dbReference>
<dbReference type="CD-CODE" id="CE726F99">
    <property type="entry name" value="Postsynaptic density"/>
</dbReference>
<dbReference type="PRO" id="PR:Q3TUH1"/>
<dbReference type="Proteomes" id="UP000000589">
    <property type="component" value="Unplaced"/>
</dbReference>
<dbReference type="RNAct" id="Q3TUH1">
    <property type="molecule type" value="protein"/>
</dbReference>
<dbReference type="GO" id="GO:0005743">
    <property type="term" value="C:mitochondrial inner membrane"/>
    <property type="evidence" value="ECO:0000250"/>
    <property type="project" value="UniProtKB"/>
</dbReference>
<dbReference type="GO" id="GO:0005739">
    <property type="term" value="C:mitochondrion"/>
    <property type="evidence" value="ECO:0007005"/>
    <property type="project" value="MGI"/>
</dbReference>
<dbReference type="GO" id="GO:0004605">
    <property type="term" value="F:phosphatidate cytidylyltransferase activity"/>
    <property type="evidence" value="ECO:0000250"/>
    <property type="project" value="UniProtKB"/>
</dbReference>
<dbReference type="GO" id="GO:0032049">
    <property type="term" value="P:cardiolipin biosynthetic process"/>
    <property type="evidence" value="ECO:0000250"/>
    <property type="project" value="UniProtKB"/>
</dbReference>
<dbReference type="GO" id="GO:0016024">
    <property type="term" value="P:CDP-diacylglycerol biosynthetic process"/>
    <property type="evidence" value="ECO:0007669"/>
    <property type="project" value="UniProtKB-UniPathway"/>
</dbReference>
<dbReference type="InterPro" id="IPR015222">
    <property type="entry name" value="Tam41"/>
</dbReference>
<dbReference type="PANTHER" id="PTHR13619">
    <property type="entry name" value="PHOSPHATIDATE CYTIDYLYLTRANSFERASE, MITOCHONDRIAL"/>
    <property type="match status" value="1"/>
</dbReference>
<dbReference type="PANTHER" id="PTHR13619:SF0">
    <property type="entry name" value="PHOSPHATIDATE CYTIDYLYLTRANSFERASE, MITOCHONDRIAL"/>
    <property type="match status" value="1"/>
</dbReference>
<dbReference type="Pfam" id="PF09139">
    <property type="entry name" value="Tam41_Mmp37"/>
    <property type="match status" value="1"/>
</dbReference>
<dbReference type="PIRSF" id="PIRSF028840">
    <property type="entry name" value="Mmp37"/>
    <property type="match status" value="1"/>
</dbReference>
<protein>
    <recommendedName>
        <fullName>Phosphatidate cytidylyltransferase, mitochondrial</fullName>
        <ecNumber evidence="1">2.7.7.41</ecNumber>
    </recommendedName>
    <alternativeName>
        <fullName>CDP-diacylglycerol synthase</fullName>
        <shortName>CDP-DAG synthase</shortName>
    </alternativeName>
    <alternativeName>
        <fullName>Mitochondrial translocator assembly and maintenance protein 41 homolog</fullName>
        <shortName>TAM41</shortName>
    </alternativeName>
</protein>
<proteinExistence type="evidence at protein level"/>
<sequence>MALQALHSSGVGLRRILAHFPEDLSLAFAYGSAVYRQAGPSAHQENPMLDLVFTVDDPVAWHAMNLKKNWSHYSFLKLLGPRIISSIQNNYGAGVYFNPLIRCDGKLIKYGVISTGTLIEDLLNWNNLYIAGRLQKPVKIVSMNENMALRAALDKNLRSAVTTACLMLPESFSEEDLFIEIAGLSYSGDFRMVIGEEKSKVLNIVKPNVGHFRELYESILQKDPQVVYKMHQGQLEIDKSPEGQFTQLMTLPRTLQQQINHIMDPPGRNRDVEETLLQVAQDPDCGDVVRLAISSIVRPSSIRQSTKGLFTAGMKKSVIYSSRKLNKMWKGWMSKAS</sequence>
<accession>Q3TUH1</accession>
<comment type="function">
    <text evidence="1">Catalyzes the conversion of phosphatidic acid (PA) to CDP-diacylglycerol (CDP-DAG), an essential intermediate in the synthesis of phosphatidylglycerol, cardiolipin and phosphatidylinositol.</text>
</comment>
<comment type="catalytic activity">
    <reaction evidence="1">
        <text>a 1,2-diacyl-sn-glycero-3-phosphate + CTP + H(+) = a CDP-1,2-diacyl-sn-glycerol + diphosphate</text>
        <dbReference type="Rhea" id="RHEA:16229"/>
        <dbReference type="ChEBI" id="CHEBI:15378"/>
        <dbReference type="ChEBI" id="CHEBI:33019"/>
        <dbReference type="ChEBI" id="CHEBI:37563"/>
        <dbReference type="ChEBI" id="CHEBI:58332"/>
        <dbReference type="ChEBI" id="CHEBI:58608"/>
        <dbReference type="EC" id="2.7.7.41"/>
    </reaction>
    <physiologicalReaction direction="left-to-right" evidence="1">
        <dbReference type="Rhea" id="RHEA:16230"/>
    </physiologicalReaction>
</comment>
<comment type="cofactor">
    <cofactor evidence="2">
        <name>Mg(2+)</name>
        <dbReference type="ChEBI" id="CHEBI:18420"/>
    </cofactor>
</comment>
<comment type="pathway">
    <text evidence="1">Phospholipid metabolism; CDP-diacylglycerol biosynthesis; CDP-diacylglycerol from sn-glycerol 3-phosphate: step 3/3.</text>
</comment>
<comment type="subcellular location">
    <subcellularLocation>
        <location evidence="1">Mitochondrion inner membrane</location>
        <topology evidence="1">Peripheral membrane protein</topology>
        <orientation evidence="2">Matrix side</orientation>
    </subcellularLocation>
</comment>
<comment type="alternative products">
    <event type="alternative splicing"/>
    <isoform>
        <id>Q3TUH1-1</id>
        <name>1</name>
        <sequence type="displayed"/>
    </isoform>
    <isoform>
        <id>Q3TUH1-2</id>
        <name>2</name>
        <sequence type="described" ref="VSP_020248 VSP_020249"/>
    </isoform>
</comment>
<comment type="similarity">
    <text evidence="4">Belongs to the TAM41 family.</text>
</comment>
<comment type="sequence caution" evidence="4">
    <conflict type="frameshift">
        <sequence resource="EMBL" id="AK005100"/>
    </conflict>
</comment>
<feature type="chain" id="PRO_0000248355" description="Phosphatidate cytidylyltransferase, mitochondrial">
    <location>
        <begin position="1"/>
        <end position="337"/>
    </location>
</feature>
<feature type="splice variant" id="VSP_020248" description="In isoform 2." evidence="3">
    <original>DFRMVIGEEKSKVLNIVKPNVGHFRELYESILQKDPQVVYKMHQGQLEIDK</original>
    <variation>LYSAWWVLHPSLAGSSWHQPHAGQLFVRKLGAWPQLLGHLGCGPAQVFPTS</variation>
    <location>
        <begin position="189"/>
        <end position="239"/>
    </location>
</feature>
<feature type="splice variant" id="VSP_020249" description="In isoform 2." evidence="3">
    <location>
        <begin position="240"/>
        <end position="337"/>
    </location>
</feature>
<reference key="1">
    <citation type="journal article" date="2004" name="Genome Res.">
        <title>The status, quality, and expansion of the NIH full-length cDNA project: the Mammalian Gene Collection (MGC).</title>
        <authorList>
            <consortium name="The MGC Project Team"/>
        </authorList>
    </citation>
    <scope>NUCLEOTIDE SEQUENCE [LARGE SCALE MRNA] (ISOFORMS 1 AND 2)</scope>
    <source>
        <strain>C57BL/6J</strain>
        <tissue>Cerebellum</tissue>
        <tissue>Head</tissue>
    </source>
</reference>
<reference key="2">
    <citation type="journal article" date="2010" name="Cell">
        <title>A tissue-specific atlas of mouse protein phosphorylation and expression.</title>
        <authorList>
            <person name="Huttlin E.L."/>
            <person name="Jedrychowski M.P."/>
            <person name="Elias J.E."/>
            <person name="Goswami T."/>
            <person name="Rad R."/>
            <person name="Beausoleil S.A."/>
            <person name="Villen J."/>
            <person name="Haas W."/>
            <person name="Sowa M.E."/>
            <person name="Gygi S.P."/>
        </authorList>
    </citation>
    <scope>IDENTIFICATION BY MASS SPECTROMETRY [LARGE SCALE ANALYSIS]</scope>
    <source>
        <tissue>Heart</tissue>
        <tissue>Kidney</tissue>
        <tissue>Lung</tissue>
        <tissue>Spleen</tissue>
        <tissue>Testis</tissue>
    </source>
</reference>
<gene>
    <name type="primary">Tamm41</name>
</gene>
<organism>
    <name type="scientific">Mus musculus</name>
    <name type="common">Mouse</name>
    <dbReference type="NCBI Taxonomy" id="10090"/>
    <lineage>
        <taxon>Eukaryota</taxon>
        <taxon>Metazoa</taxon>
        <taxon>Chordata</taxon>
        <taxon>Craniata</taxon>
        <taxon>Vertebrata</taxon>
        <taxon>Euteleostomi</taxon>
        <taxon>Mammalia</taxon>
        <taxon>Eutheria</taxon>
        <taxon>Euarchontoglires</taxon>
        <taxon>Glires</taxon>
        <taxon>Rodentia</taxon>
        <taxon>Myomorpha</taxon>
        <taxon>Muroidea</taxon>
        <taxon>Muridae</taxon>
        <taxon>Murinae</taxon>
        <taxon>Mus</taxon>
        <taxon>Mus</taxon>
    </lineage>
</organism>